<feature type="initiator methionine" description="Removed" evidence="8">
    <location>
        <position position="1"/>
    </location>
</feature>
<feature type="chain" id="PRO_0000279356" description="Transposon Ty3-G Gag-Pol polyprotein">
    <location>
        <begin position="2"/>
        <end position="1547"/>
    </location>
</feature>
<feature type="chain" id="PRO_0000279357" description="Capsid protein">
    <location>
        <begin position="2"/>
        <end position="207"/>
    </location>
</feature>
<feature type="peptide" id="PRO_0000279358" description="Spacer peptide p3">
    <location>
        <begin position="208"/>
        <end position="233"/>
    </location>
</feature>
<feature type="chain" id="PRO_0000279359" description="Nucleocapsid protein p11">
    <location>
        <begin position="234"/>
        <end position="309"/>
    </location>
</feature>
<feature type="chain" id="PRO_0000279360" description="Ty3 protease">
    <location>
        <begin position="310"/>
        <end position="442"/>
    </location>
</feature>
<feature type="peptide" id="PRO_0000279361" description="Spacer peptide J" evidence="2">
    <location>
        <begin position="443"/>
        <end position="535"/>
    </location>
</feature>
<feature type="chain" id="PRO_0000279362" description="Reverse transcriptase/ribonuclease H">
    <location>
        <begin position="536"/>
        <end position="1011"/>
    </location>
</feature>
<feature type="chain" id="PRO_0000279363" description="Integrase p61">
    <location>
        <begin position="1012"/>
        <end position="1547"/>
    </location>
</feature>
<feature type="chain" id="PRO_0000279364" description="Integrase p58">
    <location>
        <begin position="1038"/>
        <end position="1547"/>
    </location>
</feature>
<feature type="domain" description="Reverse transcriptase" evidence="4">
    <location>
        <begin position="620"/>
        <end position="797"/>
    </location>
</feature>
<feature type="domain" description="RNase H Ty3/gyspy-type">
    <location>
        <begin position="893"/>
        <end position="1011"/>
    </location>
</feature>
<feature type="domain" description="Integrase catalytic" evidence="5">
    <location>
        <begin position="1159"/>
        <end position="1324"/>
    </location>
</feature>
<feature type="zinc finger region" description="CCHC-type" evidence="3">
    <location>
        <begin position="265"/>
        <end position="282"/>
    </location>
</feature>
<feature type="region of interest" description="Integrase-type zinc finger-like">
    <location>
        <begin position="1106"/>
        <end position="1145"/>
    </location>
</feature>
<feature type="active site" description="For protease activity; shared with dimeric partner" evidence="1">
    <location>
        <position position="336"/>
    </location>
</feature>
<feature type="binding site" evidence="1">
    <location>
        <position position="686"/>
    </location>
    <ligand>
        <name>Mg(2+)</name>
        <dbReference type="ChEBI" id="CHEBI:18420"/>
        <label>1</label>
        <note>catalytic; for reverse transcriptase activity</note>
    </ligand>
</feature>
<feature type="binding site" evidence="1">
    <location>
        <position position="748"/>
    </location>
    <ligand>
        <name>Mg(2+)</name>
        <dbReference type="ChEBI" id="CHEBI:18420"/>
        <label>1</label>
        <note>catalytic; for reverse transcriptase activity</note>
    </ligand>
</feature>
<feature type="binding site" evidence="1">
    <location>
        <position position="749"/>
    </location>
    <ligand>
        <name>Mg(2+)</name>
        <dbReference type="ChEBI" id="CHEBI:18420"/>
        <label>1</label>
        <note>catalytic; for reverse transcriptase activity</note>
    </ligand>
</feature>
<feature type="binding site" evidence="1">
    <location>
        <position position="893"/>
    </location>
    <ligand>
        <name>Mg(2+)</name>
        <dbReference type="ChEBI" id="CHEBI:18420"/>
        <label>2</label>
        <note>catalytic; for RNase H activity</note>
    </ligand>
</feature>
<feature type="binding site" evidence="1">
    <location>
        <position position="936"/>
    </location>
    <ligand>
        <name>Mg(2+)</name>
        <dbReference type="ChEBI" id="CHEBI:18420"/>
        <label>2</label>
        <note>catalytic; for RNase H activity</note>
    </ligand>
</feature>
<feature type="binding site" evidence="1">
    <location>
        <position position="961"/>
    </location>
    <ligand>
        <name>Mg(2+)</name>
        <dbReference type="ChEBI" id="CHEBI:18420"/>
        <label>2</label>
        <note>catalytic; for RNase H activity</note>
    </ligand>
</feature>
<feature type="binding site" evidence="1">
    <location>
        <position position="1175"/>
    </location>
    <ligand>
        <name>Mg(2+)</name>
        <dbReference type="ChEBI" id="CHEBI:18420"/>
        <label>3</label>
        <note>catalytic; for integrase activity</note>
    </ligand>
</feature>
<feature type="binding site" evidence="1">
    <location>
        <position position="1236"/>
    </location>
    <ligand>
        <name>Mg(2+)</name>
        <dbReference type="ChEBI" id="CHEBI:18420"/>
        <label>3</label>
        <note>catalytic; for integrase activity</note>
    </ligand>
</feature>
<feature type="site" description="Cleavage; by Ty3 protease">
    <location>
        <begin position="207"/>
        <end position="208"/>
    </location>
</feature>
<feature type="site" description="Cleavage; by Ty3 protease">
    <location>
        <begin position="233"/>
        <end position="234"/>
    </location>
</feature>
<feature type="site" description="Cleavage; by Ty3 protease">
    <location>
        <begin position="309"/>
        <end position="310"/>
    </location>
</feature>
<feature type="site" description="Cleavage; by Ty3 protease" evidence="2">
    <location>
        <begin position="442"/>
        <end position="443"/>
    </location>
</feature>
<feature type="site" description="Cleavage; by Ty3 protease">
    <location>
        <begin position="535"/>
        <end position="536"/>
    </location>
</feature>
<feature type="site" description="Cleavage; by Ty3 protease">
    <location>
        <begin position="1011"/>
        <end position="1012"/>
    </location>
</feature>
<feature type="site" description="Cleavage; by Ty3 protease; partial">
    <location>
        <begin position="1037"/>
        <end position="1038"/>
    </location>
</feature>
<feature type="modified residue" description="N-acetylserine" evidence="8">
    <location>
        <position position="2"/>
    </location>
</feature>
<feature type="mutagenesis site" description="Reduces level of VLP formation and maturation." evidence="10">
    <original>C</original>
    <variation>S</variation>
    <location>
        <position position="267"/>
    </location>
</feature>
<feature type="mutagenesis site" description="Reduces level of VLP formation and maturation." evidence="10">
    <original>H</original>
    <variation>Q</variation>
    <location>
        <position position="275"/>
    </location>
</feature>
<feature type="turn" evidence="16">
    <location>
        <begin position="552"/>
        <end position="555"/>
    </location>
</feature>
<feature type="helix" evidence="16">
    <location>
        <begin position="558"/>
        <end position="563"/>
    </location>
</feature>
<feature type="turn" evidence="16">
    <location>
        <begin position="565"/>
        <end position="567"/>
    </location>
</feature>
<feature type="helix" evidence="16">
    <location>
        <begin position="608"/>
        <end position="621"/>
    </location>
</feature>
<feature type="strand" evidence="16">
    <location>
        <begin position="636"/>
        <end position="640"/>
    </location>
</feature>
<feature type="strand" evidence="16">
    <location>
        <begin position="646"/>
        <end position="650"/>
    </location>
</feature>
<feature type="helix" evidence="16">
    <location>
        <begin position="653"/>
        <end position="656"/>
    </location>
</feature>
<feature type="helix" evidence="16">
    <location>
        <begin position="669"/>
        <end position="673"/>
    </location>
</feature>
<feature type="strand" evidence="16">
    <location>
        <begin position="681"/>
        <end position="687"/>
    </location>
</feature>
<feature type="helix" evidence="16">
    <location>
        <begin position="690"/>
        <end position="693"/>
    </location>
</feature>
<feature type="strand" evidence="16">
    <location>
        <begin position="694"/>
        <end position="696"/>
    </location>
</feature>
<feature type="helix" evidence="16">
    <location>
        <begin position="698"/>
        <end position="704"/>
    </location>
</feature>
<feature type="strand" evidence="16">
    <location>
        <begin position="712"/>
        <end position="717"/>
    </location>
</feature>
<feature type="helix" evidence="16">
    <location>
        <begin position="725"/>
        <end position="737"/>
    </location>
</feature>
<feature type="strand" evidence="16">
    <location>
        <begin position="743"/>
        <end position="746"/>
    </location>
</feature>
<feature type="strand" evidence="16">
    <location>
        <begin position="749"/>
        <end position="756"/>
    </location>
</feature>
<feature type="helix" evidence="16">
    <location>
        <begin position="757"/>
        <end position="773"/>
    </location>
</feature>
<feature type="helix" evidence="16">
    <location>
        <begin position="780"/>
        <end position="782"/>
    </location>
</feature>
<feature type="strand" evidence="16">
    <location>
        <begin position="795"/>
        <end position="797"/>
    </location>
</feature>
<feature type="strand" evidence="16">
    <location>
        <begin position="802"/>
        <end position="804"/>
    </location>
</feature>
<feature type="helix" evidence="16">
    <location>
        <begin position="806"/>
        <end position="809"/>
    </location>
</feature>
<feature type="turn" evidence="16">
    <location>
        <begin position="810"/>
        <end position="814"/>
    </location>
</feature>
<feature type="helix" evidence="16">
    <location>
        <begin position="821"/>
        <end position="832"/>
    </location>
</feature>
<feature type="turn" evidence="16">
    <location>
        <begin position="833"/>
        <end position="837"/>
    </location>
</feature>
<feature type="helix" evidence="16">
    <location>
        <begin position="841"/>
        <end position="844"/>
    </location>
</feature>
<feature type="helix" evidence="16">
    <location>
        <begin position="849"/>
        <end position="853"/>
    </location>
</feature>
<feature type="helix" evidence="16">
    <location>
        <begin position="863"/>
        <end position="871"/>
    </location>
</feature>
<feature type="turn" evidence="16">
    <location>
        <begin position="876"/>
        <end position="878"/>
    </location>
</feature>
<feature type="strand" evidence="16">
    <location>
        <begin position="884"/>
        <end position="891"/>
    </location>
</feature>
<feature type="strand" evidence="16">
    <location>
        <begin position="899"/>
        <end position="906"/>
    </location>
</feature>
<feature type="strand" evidence="16">
    <location>
        <begin position="908"/>
        <end position="911"/>
    </location>
</feature>
<feature type="strand" evidence="16">
    <location>
        <begin position="913"/>
        <end position="921"/>
    </location>
</feature>
<feature type="helix" evidence="16">
    <location>
        <begin position="932"/>
        <end position="944"/>
    </location>
</feature>
<feature type="helix" evidence="16">
    <location>
        <begin position="948"/>
        <end position="951"/>
    </location>
</feature>
<feature type="strand" evidence="16">
    <location>
        <begin position="957"/>
        <end position="959"/>
    </location>
</feature>
<feature type="helix" evidence="16">
    <location>
        <begin position="965"/>
        <end position="969"/>
    </location>
</feature>
<feature type="strand" evidence="16">
    <location>
        <begin position="970"/>
        <end position="972"/>
    </location>
</feature>
<feature type="helix" evidence="16">
    <location>
        <begin position="976"/>
        <end position="986"/>
    </location>
</feature>
<feature type="strand" evidence="16">
    <location>
        <begin position="997"/>
        <end position="1000"/>
    </location>
</feature>
<feature type="helix" evidence="16">
    <location>
        <begin position="1001"/>
        <end position="1008"/>
    </location>
</feature>
<organism>
    <name type="scientific">Saccharomyces cerevisiae (strain ATCC 204508 / S288c)</name>
    <name type="common">Baker's yeast</name>
    <dbReference type="NCBI Taxonomy" id="559292"/>
    <lineage>
        <taxon>Eukaryota</taxon>
        <taxon>Fungi</taxon>
        <taxon>Dikarya</taxon>
        <taxon>Ascomycota</taxon>
        <taxon>Saccharomycotina</taxon>
        <taxon>Saccharomycetes</taxon>
        <taxon>Saccharomycetales</taxon>
        <taxon>Saccharomycetaceae</taxon>
        <taxon>Saccharomyces</taxon>
    </lineage>
</organism>
<accession>Q99315</accession>
<accession>D6VUP1</accession>
<accession>Q07096</accession>
<protein>
    <recommendedName>
        <fullName>Transposon Ty3-G Gag-Pol polyprotein</fullName>
    </recommendedName>
    <alternativeName>
        <fullName>Gag3-Pol3</fullName>
    </alternativeName>
    <alternativeName>
        <fullName>Transposon Ty3-1 TYA-TYB polyprotein</fullName>
    </alternativeName>
    <component>
        <recommendedName>
            <fullName>Capsid protein</fullName>
            <shortName>CA</shortName>
        </recommendedName>
        <alternativeName>
            <fullName>p24</fullName>
        </alternativeName>
    </component>
    <component>
        <recommendedName>
            <fullName>Spacer peptide p3</fullName>
        </recommendedName>
    </component>
    <component>
        <recommendedName>
            <fullName>Nucleocapsid protein p11</fullName>
            <shortName>NC</shortName>
        </recommendedName>
    </component>
    <component>
        <recommendedName>
            <fullName>Ty3 protease</fullName>
            <shortName>PR</shortName>
            <ecNumber>3.4.23.-</ecNumber>
        </recommendedName>
        <alternativeName>
            <fullName>p16</fullName>
        </alternativeName>
    </component>
    <component>
        <recommendedName>
            <fullName>Spacer peptide J</fullName>
        </recommendedName>
    </component>
    <component>
        <recommendedName>
            <fullName>Reverse transcriptase/ribonuclease H</fullName>
            <shortName>RT</shortName>
            <shortName>RT-RH</shortName>
            <ecNumber>2.7.7.49</ecNumber>
            <ecNumber>2.7.7.7</ecNumber>
            <ecNumber>3.1.26.4</ecNumber>
        </recommendedName>
        <alternativeName>
            <fullName>p55</fullName>
        </alternativeName>
    </component>
    <component>
        <recommendedName>
            <fullName>Integrase p61</fullName>
            <shortName>IN</shortName>
        </recommendedName>
    </component>
    <component>
        <recommendedName>
            <fullName>Integrase p58</fullName>
            <shortName>IN</shortName>
        </recommendedName>
    </component>
</protein>
<gene>
    <name type="primary">TY3B-G</name>
    <name type="synonym">YGRWTy3-1 POL</name>
    <name type="ordered locus">YGR109W-B</name>
    <name type="ORF">G5984</name>
</gene>
<dbReference type="EC" id="3.4.23.-"/>
<dbReference type="EC" id="2.7.7.49"/>
<dbReference type="EC" id="2.7.7.7"/>
<dbReference type="EC" id="3.1.26.4"/>
<dbReference type="EMBL" id="M34549">
    <property type="protein sequence ID" value="AAA98435.1"/>
    <property type="status" value="ALT_SEQ"/>
    <property type="molecule type" value="Genomic_DNA"/>
</dbReference>
<dbReference type="EMBL" id="Z72894">
    <property type="protein sequence ID" value="CAA97115.1"/>
    <property type="status" value="ALT_SEQ"/>
    <property type="molecule type" value="Genomic_DNA"/>
</dbReference>
<dbReference type="EMBL" id="Z72895">
    <property type="protein sequence ID" value="CAA97117.1"/>
    <property type="status" value="ALT_SEQ"/>
    <property type="molecule type" value="Genomic_DNA"/>
</dbReference>
<dbReference type="EMBL" id="AH003104">
    <property type="protein sequence ID" value="AAA66936.1"/>
    <property type="molecule type" value="Genomic_DNA"/>
</dbReference>
<dbReference type="EMBL" id="BK006941">
    <property type="protein sequence ID" value="DAA08202.1"/>
    <property type="status" value="ALT_SEQ"/>
    <property type="molecule type" value="Genomic_DNA"/>
</dbReference>
<dbReference type="PIR" id="S22875">
    <property type="entry name" value="S22875"/>
</dbReference>
<dbReference type="PIR" id="S69842">
    <property type="entry name" value="S69842"/>
</dbReference>
<dbReference type="RefSeq" id="NP_011624.1">
    <property type="nucleotide sequence ID" value="NM_001184381.2"/>
</dbReference>
<dbReference type="PDB" id="4OL8">
    <property type="method" value="X-ray"/>
    <property type="resolution" value="3.10 A"/>
    <property type="chains" value="A/B/E/F=536-1011"/>
</dbReference>
<dbReference type="PDB" id="7Q5B">
    <property type="method" value="EM"/>
    <property type="resolution" value="3.98 A"/>
    <property type="chains" value="A/B/C/D=1-1547"/>
</dbReference>
<dbReference type="PDBsum" id="4OL8"/>
<dbReference type="PDBsum" id="7Q5B"/>
<dbReference type="EMDB" id="EMD-13831"/>
<dbReference type="SMR" id="Q99315"/>
<dbReference type="BioGRID" id="33356">
    <property type="interactions" value="2"/>
</dbReference>
<dbReference type="FunCoup" id="Q99315">
    <property type="interactions" value="30"/>
</dbReference>
<dbReference type="MEROPS" id="A02.022"/>
<dbReference type="GlyGen" id="Q99315">
    <property type="glycosylation" value="1 site"/>
</dbReference>
<dbReference type="iPTMnet" id="Q99315"/>
<dbReference type="PaxDb" id="4932-YGR109W-B"/>
<dbReference type="PeptideAtlas" id="Q99315"/>
<dbReference type="GeneID" id="853006"/>
<dbReference type="KEGG" id="sce:YGR109W-B"/>
<dbReference type="AGR" id="SGD:S000007347"/>
<dbReference type="SGD" id="S000007347">
    <property type="gene designation" value="YGR109W-B"/>
</dbReference>
<dbReference type="eggNOG" id="KOG0017">
    <property type="taxonomic scope" value="Eukaryota"/>
</dbReference>
<dbReference type="HOGENOM" id="CLU_000384_9_7_1"/>
<dbReference type="InParanoid" id="Q99315"/>
<dbReference type="OrthoDB" id="4488294at2759"/>
<dbReference type="BioGRID-ORCS" id="853006">
    <property type="hits" value="0 hits in 10 CRISPR screens"/>
</dbReference>
<dbReference type="ChiTaRS" id="YGR109W-B">
    <property type="organism name" value="yeast"/>
</dbReference>
<dbReference type="EvolutionaryTrace" id="Q99315"/>
<dbReference type="Proteomes" id="UP000002311">
    <property type="component" value="Chromosome VII"/>
</dbReference>
<dbReference type="RNAct" id="Q99315">
    <property type="molecule type" value="protein"/>
</dbReference>
<dbReference type="GO" id="GO:0005737">
    <property type="term" value="C:cytoplasm"/>
    <property type="evidence" value="ECO:0007669"/>
    <property type="project" value="UniProtKB-SubCell"/>
</dbReference>
<dbReference type="GO" id="GO:0005634">
    <property type="term" value="C:nucleus"/>
    <property type="evidence" value="ECO:0000314"/>
    <property type="project" value="SGD"/>
</dbReference>
<dbReference type="GO" id="GO:0004190">
    <property type="term" value="F:aspartic-type endopeptidase activity"/>
    <property type="evidence" value="ECO:0007669"/>
    <property type="project" value="UniProtKB-KW"/>
</dbReference>
<dbReference type="GO" id="GO:0005524">
    <property type="term" value="F:ATP binding"/>
    <property type="evidence" value="ECO:0007669"/>
    <property type="project" value="UniProtKB-KW"/>
</dbReference>
<dbReference type="GO" id="GO:0003677">
    <property type="term" value="F:DNA binding"/>
    <property type="evidence" value="ECO:0007669"/>
    <property type="project" value="UniProtKB-KW"/>
</dbReference>
<dbReference type="GO" id="GO:0003887">
    <property type="term" value="F:DNA-directed DNA polymerase activity"/>
    <property type="evidence" value="ECO:0007669"/>
    <property type="project" value="UniProtKB-KW"/>
</dbReference>
<dbReference type="GO" id="GO:0003723">
    <property type="term" value="F:RNA binding"/>
    <property type="evidence" value="ECO:0007669"/>
    <property type="project" value="UniProtKB-KW"/>
</dbReference>
<dbReference type="GO" id="GO:0003964">
    <property type="term" value="F:RNA-directed DNA polymerase activity"/>
    <property type="evidence" value="ECO:0007669"/>
    <property type="project" value="UniProtKB-KW"/>
</dbReference>
<dbReference type="GO" id="GO:0004523">
    <property type="term" value="F:RNA-DNA hybrid ribonuclease activity"/>
    <property type="evidence" value="ECO:0007669"/>
    <property type="project" value="UniProtKB-EC"/>
</dbReference>
<dbReference type="GO" id="GO:0008270">
    <property type="term" value="F:zinc ion binding"/>
    <property type="evidence" value="ECO:0007669"/>
    <property type="project" value="UniProtKB-KW"/>
</dbReference>
<dbReference type="GO" id="GO:0015074">
    <property type="term" value="P:DNA integration"/>
    <property type="evidence" value="ECO:0007669"/>
    <property type="project" value="UniProtKB-KW"/>
</dbReference>
<dbReference type="GO" id="GO:0006310">
    <property type="term" value="P:DNA recombination"/>
    <property type="evidence" value="ECO:0007669"/>
    <property type="project" value="UniProtKB-KW"/>
</dbReference>
<dbReference type="GO" id="GO:0006508">
    <property type="term" value="P:proteolysis"/>
    <property type="evidence" value="ECO:0007669"/>
    <property type="project" value="UniProtKB-KW"/>
</dbReference>
<dbReference type="GO" id="GO:0075523">
    <property type="term" value="P:viral translational frameshifting"/>
    <property type="evidence" value="ECO:0007669"/>
    <property type="project" value="UniProtKB-KW"/>
</dbReference>
<dbReference type="CDD" id="cd00303">
    <property type="entry name" value="retropepsin_like"/>
    <property type="match status" value="1"/>
</dbReference>
<dbReference type="CDD" id="cd09274">
    <property type="entry name" value="RNase_HI_RT_Ty3"/>
    <property type="match status" value="1"/>
</dbReference>
<dbReference type="CDD" id="cd01647">
    <property type="entry name" value="RT_LTR"/>
    <property type="match status" value="1"/>
</dbReference>
<dbReference type="FunFam" id="3.10.10.10:FF:000007">
    <property type="entry name" value="Retrovirus-related Pol polyprotein from transposon 17.6-like Protein"/>
    <property type="match status" value="1"/>
</dbReference>
<dbReference type="FunFam" id="1.10.340.70:FF:000001">
    <property type="entry name" value="Retrovirus-related Pol polyprotein from transposon gypsy-like Protein"/>
    <property type="match status" value="1"/>
</dbReference>
<dbReference type="FunFam" id="3.30.70.270:FF:000026">
    <property type="entry name" value="Transposon Ty3-G Gag-Pol polyprotein"/>
    <property type="match status" value="1"/>
</dbReference>
<dbReference type="Gene3D" id="1.10.340.70">
    <property type="match status" value="1"/>
</dbReference>
<dbReference type="Gene3D" id="3.30.70.270">
    <property type="match status" value="2"/>
</dbReference>
<dbReference type="Gene3D" id="2.40.70.10">
    <property type="entry name" value="Acid Proteases"/>
    <property type="match status" value="1"/>
</dbReference>
<dbReference type="Gene3D" id="3.10.10.10">
    <property type="entry name" value="HIV Type 1 Reverse Transcriptase, subunit A, domain 1"/>
    <property type="match status" value="1"/>
</dbReference>
<dbReference type="Gene3D" id="3.30.420.10">
    <property type="entry name" value="Ribonuclease H-like superfamily/Ribonuclease H"/>
    <property type="match status" value="1"/>
</dbReference>
<dbReference type="InterPro" id="IPR043502">
    <property type="entry name" value="DNA/RNA_pol_sf"/>
</dbReference>
<dbReference type="InterPro" id="IPR001584">
    <property type="entry name" value="Integrase_cat-core"/>
</dbReference>
<dbReference type="InterPro" id="IPR041588">
    <property type="entry name" value="Integrase_H2C2"/>
</dbReference>
<dbReference type="InterPro" id="IPR024650">
    <property type="entry name" value="Peptidase_A2B"/>
</dbReference>
<dbReference type="InterPro" id="IPR021109">
    <property type="entry name" value="Peptidase_aspartic_dom_sf"/>
</dbReference>
<dbReference type="InterPro" id="IPR050951">
    <property type="entry name" value="Retrovirus_Pol_polyprotein"/>
</dbReference>
<dbReference type="InterPro" id="IPR043128">
    <property type="entry name" value="Rev_trsase/Diguanyl_cyclase"/>
</dbReference>
<dbReference type="InterPro" id="IPR012337">
    <property type="entry name" value="RNaseH-like_sf"/>
</dbReference>
<dbReference type="InterPro" id="IPR036397">
    <property type="entry name" value="RNaseH_sf"/>
</dbReference>
<dbReference type="InterPro" id="IPR000477">
    <property type="entry name" value="RT_dom"/>
</dbReference>
<dbReference type="InterPro" id="IPR041577">
    <property type="entry name" value="RT_RNaseH_2"/>
</dbReference>
<dbReference type="InterPro" id="IPR056924">
    <property type="entry name" value="SH3_Tf2-1"/>
</dbReference>
<dbReference type="InterPro" id="IPR045358">
    <property type="entry name" value="Ty3_capsid"/>
</dbReference>
<dbReference type="InterPro" id="IPR001878">
    <property type="entry name" value="Znf_CCHC"/>
</dbReference>
<dbReference type="InterPro" id="IPR036875">
    <property type="entry name" value="Znf_CCHC_sf"/>
</dbReference>
<dbReference type="PANTHER" id="PTHR37984">
    <property type="entry name" value="PROTEIN CBG26694"/>
    <property type="match status" value="1"/>
</dbReference>
<dbReference type="PANTHER" id="PTHR37984:SF5">
    <property type="entry name" value="PROTEIN NYNRIN-LIKE"/>
    <property type="match status" value="1"/>
</dbReference>
<dbReference type="Pfam" id="PF17921">
    <property type="entry name" value="Integrase_H2C2"/>
    <property type="match status" value="1"/>
</dbReference>
<dbReference type="Pfam" id="PF12384">
    <property type="entry name" value="Peptidase_A2B"/>
    <property type="match status" value="1"/>
</dbReference>
<dbReference type="Pfam" id="PF17919">
    <property type="entry name" value="RT_RNaseH_2"/>
    <property type="match status" value="1"/>
</dbReference>
<dbReference type="Pfam" id="PF00665">
    <property type="entry name" value="rve"/>
    <property type="match status" value="1"/>
</dbReference>
<dbReference type="Pfam" id="PF00078">
    <property type="entry name" value="RVT_1"/>
    <property type="match status" value="1"/>
</dbReference>
<dbReference type="Pfam" id="PF24626">
    <property type="entry name" value="SH3_Tf2-1"/>
    <property type="match status" value="1"/>
</dbReference>
<dbReference type="Pfam" id="PF19259">
    <property type="entry name" value="Ty3_capsid"/>
    <property type="match status" value="1"/>
</dbReference>
<dbReference type="SMART" id="SM00343">
    <property type="entry name" value="ZnF_C2HC"/>
    <property type="match status" value="1"/>
</dbReference>
<dbReference type="SUPFAM" id="SSF50630">
    <property type="entry name" value="Acid proteases"/>
    <property type="match status" value="1"/>
</dbReference>
<dbReference type="SUPFAM" id="SSF56672">
    <property type="entry name" value="DNA/RNA polymerases"/>
    <property type="match status" value="1"/>
</dbReference>
<dbReference type="SUPFAM" id="SSF57756">
    <property type="entry name" value="Retrovirus zinc finger-like domains"/>
    <property type="match status" value="1"/>
</dbReference>
<dbReference type="SUPFAM" id="SSF53098">
    <property type="entry name" value="Ribonuclease H-like"/>
    <property type="match status" value="1"/>
</dbReference>
<dbReference type="PROSITE" id="PS50994">
    <property type="entry name" value="INTEGRASE"/>
    <property type="match status" value="1"/>
</dbReference>
<dbReference type="PROSITE" id="PS50878">
    <property type="entry name" value="RT_POL"/>
    <property type="match status" value="1"/>
</dbReference>
<dbReference type="PROSITE" id="PS50158">
    <property type="entry name" value="ZF_CCHC"/>
    <property type="match status" value="1"/>
</dbReference>
<reference key="1">
    <citation type="journal article" date="1990" name="J. Virol.">
        <title>Characterization of a transpositionally active Ty3 element and identification of the Ty3 integrase protein.</title>
        <authorList>
            <person name="Hansen L.J."/>
            <person name="Sandmeyer S.B."/>
        </authorList>
    </citation>
    <scope>NUCLEOTIDE SEQUENCE [GENOMIC DNA]</scope>
    <scope>FUNCTION</scope>
    <source>
        <strain>AB950</strain>
    </source>
</reference>
<reference key="2">
    <citation type="journal article" date="1996" name="Yeast">
        <title>The sequence of a 23.4 kb segment on the right arm of chromosome VII from Saccharomyces cerevisiae reveals CLB6, SPT6, RP28A and NUP57 genes, a Ty3 element and 11 new open reading frames.</title>
        <authorList>
            <person name="Hansen M."/>
            <person name="Albers M."/>
            <person name="Backes U."/>
            <person name="Coblenz A."/>
            <person name="Leuther H."/>
            <person name="Neu R."/>
            <person name="Schreer A."/>
            <person name="Schaefer B."/>
            <person name="Zimmermann M."/>
            <person name="Wolf K."/>
        </authorList>
    </citation>
    <scope>NUCLEOTIDE SEQUENCE [GENOMIC DNA]</scope>
</reference>
<reference key="3">
    <citation type="journal article" date="1997" name="Nature">
        <title>The nucleotide sequence of Saccharomyces cerevisiae chromosome VII.</title>
        <authorList>
            <person name="Tettelin H."/>
            <person name="Agostoni-Carbone M.L."/>
            <person name="Albermann K."/>
            <person name="Albers M."/>
            <person name="Arroyo J."/>
            <person name="Backes U."/>
            <person name="Barreiros T."/>
            <person name="Bertani I."/>
            <person name="Bjourson A.J."/>
            <person name="Brueckner M."/>
            <person name="Bruschi C.V."/>
            <person name="Carignani G."/>
            <person name="Castagnoli L."/>
            <person name="Cerdan E."/>
            <person name="Clemente M.L."/>
            <person name="Coblenz A."/>
            <person name="Coglievina M."/>
            <person name="Coissac E."/>
            <person name="Defoor E."/>
            <person name="Del Bino S."/>
            <person name="Delius H."/>
            <person name="Delneri D."/>
            <person name="de Wergifosse P."/>
            <person name="Dujon B."/>
            <person name="Durand P."/>
            <person name="Entian K.-D."/>
            <person name="Eraso P."/>
            <person name="Escribano V."/>
            <person name="Fabiani L."/>
            <person name="Fartmann B."/>
            <person name="Feroli F."/>
            <person name="Feuermann M."/>
            <person name="Frontali L."/>
            <person name="Garcia-Gonzalez M."/>
            <person name="Garcia-Saez M.I."/>
            <person name="Goffeau A."/>
            <person name="Guerreiro P."/>
            <person name="Hani J."/>
            <person name="Hansen M."/>
            <person name="Hebling U."/>
            <person name="Hernandez K."/>
            <person name="Heumann K."/>
            <person name="Hilger F."/>
            <person name="Hofmann B."/>
            <person name="Indge K.J."/>
            <person name="James C.M."/>
            <person name="Klima R."/>
            <person name="Koetter P."/>
            <person name="Kramer B."/>
            <person name="Kramer W."/>
            <person name="Lauquin G."/>
            <person name="Leuther H."/>
            <person name="Louis E.J."/>
            <person name="Maillier E."/>
            <person name="Marconi A."/>
            <person name="Martegani E."/>
            <person name="Mazon M.J."/>
            <person name="Mazzoni C."/>
            <person name="McReynolds A.D.K."/>
            <person name="Melchioretto P."/>
            <person name="Mewes H.-W."/>
            <person name="Minenkova O."/>
            <person name="Mueller-Auer S."/>
            <person name="Nawrocki A."/>
            <person name="Netter P."/>
            <person name="Neu R."/>
            <person name="Nombela C."/>
            <person name="Oliver S.G."/>
            <person name="Panzeri L."/>
            <person name="Paoluzi S."/>
            <person name="Plevani P."/>
            <person name="Portetelle D."/>
            <person name="Portillo F."/>
            <person name="Potier S."/>
            <person name="Purnelle B."/>
            <person name="Rieger M."/>
            <person name="Riles L."/>
            <person name="Rinaldi T."/>
            <person name="Robben J."/>
            <person name="Rodrigues-Pousada C."/>
            <person name="Rodriguez-Belmonte E."/>
            <person name="Rodriguez-Torres A.M."/>
            <person name="Rose M."/>
            <person name="Ruzzi M."/>
            <person name="Saliola M."/>
            <person name="Sanchez-Perez M."/>
            <person name="Schaefer B."/>
            <person name="Schaefer M."/>
            <person name="Scharfe M."/>
            <person name="Schmidheini T."/>
            <person name="Schreer A."/>
            <person name="Skala J."/>
            <person name="Souciet J.-L."/>
            <person name="Steensma H.Y."/>
            <person name="Talla E."/>
            <person name="Thierry A."/>
            <person name="Vandenbol M."/>
            <person name="van der Aart Q.J.M."/>
            <person name="Van Dyck L."/>
            <person name="Vanoni M."/>
            <person name="Verhasselt P."/>
            <person name="Voet M."/>
            <person name="Volckaert G."/>
            <person name="Wambutt R."/>
            <person name="Watson M.D."/>
            <person name="Weber N."/>
            <person name="Wedler E."/>
            <person name="Wedler H."/>
            <person name="Wipfli P."/>
            <person name="Wolf K."/>
            <person name="Wright L.F."/>
            <person name="Zaccaria P."/>
            <person name="Zimmermann M."/>
            <person name="Zollner A."/>
            <person name="Kleine K."/>
        </authorList>
    </citation>
    <scope>NUCLEOTIDE SEQUENCE [LARGE SCALE GENOMIC DNA]</scope>
    <source>
        <strain>ATCC 204508 / S288c</strain>
    </source>
</reference>
<reference key="4">
    <citation type="journal article" date="2014" name="G3 (Bethesda)">
        <title>The reference genome sequence of Saccharomyces cerevisiae: Then and now.</title>
        <authorList>
            <person name="Engel S.R."/>
            <person name="Dietrich F.S."/>
            <person name="Fisk D.G."/>
            <person name="Binkley G."/>
            <person name="Balakrishnan R."/>
            <person name="Costanzo M.C."/>
            <person name="Dwight S.S."/>
            <person name="Hitz B.C."/>
            <person name="Karra K."/>
            <person name="Nash R.S."/>
            <person name="Weng S."/>
            <person name="Wong E.D."/>
            <person name="Lloyd P."/>
            <person name="Skrzypek M.S."/>
            <person name="Miyasato S.R."/>
            <person name="Simison M."/>
            <person name="Cherry J.M."/>
        </authorList>
    </citation>
    <scope>GENOME REANNOTATION</scope>
    <source>
        <strain>ATCC 204508 / S288c</strain>
    </source>
</reference>
<reference key="5">
    <citation type="journal article" date="1988" name="J. Biol. Chem.">
        <title>A yeast sigma composite element, TY3, has properties of a retrotransposon.</title>
        <authorList>
            <person name="Clark D.J."/>
            <person name="Bilanchone V.W."/>
            <person name="Haywood L.J."/>
            <person name="Dildine S.L."/>
            <person name="Sandmeyer S.B."/>
        </authorList>
    </citation>
    <scope>NUCLEOTIDE SEQUENCE [GENOMIC DNA] OF 1-22</scope>
</reference>
<reference key="6">
    <citation type="journal article" date="1992" name="J. Virol.">
        <title>Ty3 GAG3 and POL3 genes encode the components of intracellular particles.</title>
        <authorList>
            <person name="Hansen L.J."/>
            <person name="Chalker D.L."/>
            <person name="Orlinsky K.J."/>
            <person name="Sandmeyer S.B."/>
        </authorList>
    </citation>
    <scope>FUNCTION OF REVERSE TRANSCRIPTASE</scope>
    <scope>SUBCELLULAR LOCATION</scope>
</reference>
<reference key="7">
    <citation type="journal article" date="1993" name="Cell">
        <title>A novel programmed frameshift expresses the POL3 gene of retrotransposon Ty3 of yeast: frameshifting without tRNA slippage.</title>
        <authorList>
            <person name="Farabaugh P.J."/>
            <person name="Zhao H."/>
            <person name="Vimaladithan A."/>
        </authorList>
    </citation>
    <scope>RIBOSOMAL FRAMESHIFT SITE</scope>
</reference>
<reference key="8">
    <citation type="journal article" date="1993" name="Cell">
        <authorList>
            <person name="Farabaugh P.J."/>
            <person name="Zhao H."/>
            <person name="Vimaladithan A."/>
        </authorList>
    </citation>
    <scope>ERRATUM OF PUBMED:8267715</scope>
</reference>
<reference key="9">
    <citation type="journal article" date="1993" name="J. Virol.">
        <title>Proteolytic processing of Ty3 proteins is required for transposition.</title>
        <authorList>
            <person name="Kirchner J."/>
            <person name="Sandmeyer S.B."/>
        </authorList>
    </citation>
    <scope>PROTEOLYTIC PROCESSING</scope>
    <scope>CLEAVAGE SITES</scope>
</reference>
<reference key="10">
    <citation type="journal article" date="1994" name="J. Virol.">
        <title>The Cys-His motif of Ty3 NC can be contributed by Gag3 or Gag3-Pol3 polyproteins.</title>
        <authorList>
            <person name="Orlinsky K.J."/>
            <person name="Sandmeyer S.B."/>
        </authorList>
    </citation>
    <scope>FUNCTION OF NUCLEOCAPSID</scope>
    <scope>MUTAGENESIS OF CYS-267 AND HIS-275</scope>
</reference>
<reference key="11">
    <citation type="journal article" date="1998" name="Genome Res.">
        <title>Transposable elements and genome organization: a comprehensive survey of retrotransposons revealed by the complete Saccharomyces cerevisiae genome sequence.</title>
        <authorList>
            <person name="Kim J.M."/>
            <person name="Vanguri S."/>
            <person name="Boeke J.D."/>
            <person name="Gabriel A."/>
            <person name="Voytas D.F."/>
        </authorList>
    </citation>
    <scope>NOMENCLATURE</scope>
</reference>
<reference key="12">
    <citation type="journal article" date="1999" name="J. Biol. Chem.">
        <title>Characterization of active reverse transcriptase and nucleoprotein complexes of the yeast retrotransposon Ty3 in vitro.</title>
        <authorList>
            <person name="Cristofari G."/>
            <person name="Gabus C."/>
            <person name="Ficheux D."/>
            <person name="Bona M."/>
            <person name="Le Grice S.F.J."/>
            <person name="Darlix J.-L."/>
        </authorList>
    </citation>
    <scope>FUNCTION OF REVERSE TRANSCRIPTASE</scope>
</reference>
<reference key="13">
    <citation type="journal article" date="2001" name="J. Virol.">
        <title>Ten-kilodalton domain in Ty3 Gag3-Pol3p between PR and RT is dispensable for Ty3 transposition.</title>
        <authorList>
            <person name="Claypool J.A."/>
            <person name="Malik H.S."/>
            <person name="Eickbush T.H."/>
            <person name="Sandmeyer S.B."/>
        </authorList>
    </citation>
    <scope>CHARACTERIZATION OF PEPTIDE J</scope>
</reference>
<reference key="14">
    <citation type="journal article" date="2005" name="Cytogenet. Genome Res.">
        <title>Happy together: the life and times of Ty retrotransposons and their hosts.</title>
        <authorList>
            <person name="Lesage P."/>
            <person name="Todeschini A.L."/>
        </authorList>
    </citation>
    <scope>REVIEW</scope>
</reference>
<reference key="15">
    <citation type="journal article" date="2005" name="J. Virol.">
        <title>Investigation by atomic force microscopy of the structure of Ty3 retrotransposon particles.</title>
        <authorList>
            <person name="Kuznetsov Y.G."/>
            <person name="Zhang M."/>
            <person name="Menees T.M."/>
            <person name="McPherson A."/>
            <person name="Sandmeyer S.B."/>
        </authorList>
    </citation>
    <scope>CLEAVAGE OF INITIATOR METHIONINE</scope>
    <scope>ACETYLATION AT SER-2</scope>
    <scope>CLEAVAGE SITE GLY-207-208-ALA</scope>
    <scope>IDENTIFICATION BY MASS SPECTROMETRY</scope>
</reference>
<reference evidence="14" key="16">
    <citation type="journal article" date="2014" name="Nat. Struct. Mol. Biol.">
        <title>Ty3 reverse transcriptase complexed with an RNA-DNA hybrid shows structural and functional asymmetry.</title>
        <authorList>
            <person name="Nowak E."/>
            <person name="Miller J.T."/>
            <person name="Bona M.K."/>
            <person name="Studnicka J."/>
            <person name="Szczepanowski R.H."/>
            <person name="Jurkowski J."/>
            <person name="Le Grice S.F."/>
            <person name="Nowotny M."/>
        </authorList>
    </citation>
    <scope>X-RAY CRYSTALLOGRAPHY (3.10 ANGSTROMS) OF 536-1011</scope>
</reference>
<reference evidence="15" key="17">
    <citation type="journal article" date="2021" name="Nat. Commun.">
        <title>Structural basis of Ty3 retrotransposon integration at RNA Polymerase III-transcribed genes.</title>
        <authorList>
            <person name="Abascal-Palacios G."/>
            <person name="Jochem L."/>
            <person name="Pla-Prats C."/>
            <person name="Beuron F."/>
            <person name="Vannini A."/>
        </authorList>
    </citation>
    <scope>STRUCTURE BY ELECTRON MICROSCOPY (3.98 ANGSTROMS)</scope>
</reference>
<name>YG31B_YEAST</name>
<keyword id="KW-0002">3D-structure</keyword>
<keyword id="KW-0007">Acetylation</keyword>
<keyword id="KW-0064">Aspartyl protease</keyword>
<keyword id="KW-0067">ATP-binding</keyword>
<keyword id="KW-0963">Cytoplasm</keyword>
<keyword id="KW-0229">DNA integration</keyword>
<keyword id="KW-0233">DNA recombination</keyword>
<keyword id="KW-0238">DNA-binding</keyword>
<keyword id="KW-0239">DNA-directed DNA polymerase</keyword>
<keyword id="KW-0255">Endonuclease</keyword>
<keyword id="KW-0378">Hydrolase</keyword>
<keyword id="KW-0460">Magnesium</keyword>
<keyword id="KW-0479">Metal-binding</keyword>
<keyword id="KW-0511">Multifunctional enzyme</keyword>
<keyword id="KW-0540">Nuclease</keyword>
<keyword id="KW-0547">Nucleotide-binding</keyword>
<keyword id="KW-0548">Nucleotidyltransferase</keyword>
<keyword id="KW-0539">Nucleus</keyword>
<keyword id="KW-0645">Protease</keyword>
<keyword id="KW-1185">Reference proteome</keyword>
<keyword id="KW-0688">Ribosomal frameshifting</keyword>
<keyword id="KW-0694">RNA-binding</keyword>
<keyword id="KW-0695">RNA-directed DNA polymerase</keyword>
<keyword id="KW-0808">Transferase</keyword>
<keyword id="KW-0814">Transposable element</keyword>
<keyword id="KW-1188">Viral release from host cell</keyword>
<keyword id="KW-0917">Virion maturation</keyword>
<keyword id="KW-0862">Zinc</keyword>
<keyword id="KW-0863">Zinc-finger</keyword>
<comment type="function">
    <molecule>Capsid protein</molecule>
    <text>Capsid protein (CA) is the structural component of the virus-like particle (VLP), forming the shell that encapsulates the genomic RNA-nucleocapsid complex.</text>
</comment>
<comment type="function">
    <molecule>Nucleocapsid protein p11</molecule>
    <text evidence="1 6 7 9 10">Nucleocapsid protein p11 (NC) forms the nucleocore that coats the retro-elements dimeric RNA. Binds these RNAs through its zinc fingers (By similarity). Promotes primer tRNA(i)-Met annealing to the multipartite primer-binding site (PBS), dimerization of Ty3 RNA and initiation of reverse transcription.</text>
</comment>
<comment type="function">
    <molecule>Ty3 protease</molecule>
    <text>The aspartyl protease (PR) mediates the proteolytic cleavages of the Gag and Gag-Pol polyproteins after assembly of the VLP.</text>
</comment>
<comment type="function">
    <molecule>Reverse transcriptase/ribonuclease H</molecule>
    <text>Reverse transcriptase/ribonuclease H (RT) is a multifunctional enzyme that catalyzes the conversion of the retro-elements RNA genome into dsDNA within the VLP. The enzyme displays a DNA polymerase activity that can copy either DNA or RNA templates, and a ribonuclease H (RNase H) activity that cleaves the RNA strand of RNA-DNA heteroduplexes during plus-strand synthesis and hydrolyzes RNA primers. The conversion leads to a linear dsDNA copy of the retrotransposon that includes long terminal repeats (LTRs) at both ends.</text>
</comment>
<comment type="function">
    <molecule>Integrase p61</molecule>
    <text>Integrase (IN) targets the VLP to the nucleus, where a subparticle preintegration complex (PIC) containing at least integrase and the newly synthesized dsDNA copy of the retrotransposon must transit the nuclear membrane. Once in the nucleus, integrase performs the integration of the dsDNA into the host genome.</text>
</comment>
<comment type="catalytic activity">
    <molecule>Reverse transcriptase/ribonuclease H</molecule>
    <reaction evidence="4">
        <text>DNA(n) + a 2'-deoxyribonucleoside 5'-triphosphate = DNA(n+1) + diphosphate</text>
        <dbReference type="Rhea" id="RHEA:22508"/>
        <dbReference type="Rhea" id="RHEA-COMP:17339"/>
        <dbReference type="Rhea" id="RHEA-COMP:17340"/>
        <dbReference type="ChEBI" id="CHEBI:33019"/>
        <dbReference type="ChEBI" id="CHEBI:61560"/>
        <dbReference type="ChEBI" id="CHEBI:173112"/>
        <dbReference type="EC" id="2.7.7.49"/>
    </reaction>
</comment>
<comment type="catalytic activity">
    <molecule>Reverse transcriptase/ribonuclease H</molecule>
    <reaction evidence="4">
        <text>DNA(n) + a 2'-deoxyribonucleoside 5'-triphosphate = DNA(n+1) + diphosphate</text>
        <dbReference type="Rhea" id="RHEA:22508"/>
        <dbReference type="Rhea" id="RHEA-COMP:17339"/>
        <dbReference type="Rhea" id="RHEA-COMP:17340"/>
        <dbReference type="ChEBI" id="CHEBI:33019"/>
        <dbReference type="ChEBI" id="CHEBI:61560"/>
        <dbReference type="ChEBI" id="CHEBI:173112"/>
        <dbReference type="EC" id="2.7.7.7"/>
    </reaction>
</comment>
<comment type="catalytic activity">
    <molecule>Reverse transcriptase/ribonuclease H</molecule>
    <reaction>
        <text>Endonucleolytic cleavage to 5'-phosphomonoester.</text>
        <dbReference type="EC" id="3.1.26.4"/>
    </reaction>
</comment>
<comment type="subunit">
    <molecule>Ty3 protease</molecule>
    <text>The protease is a homodimer, whose active site consists of two apposed aspartic acid residues.</text>
</comment>
<comment type="subcellular location">
    <subcellularLocation>
        <location evidence="7">Cytoplasm</location>
    </subcellularLocation>
    <subcellularLocation>
        <location evidence="7">Nucleus</location>
    </subcellularLocation>
</comment>
<comment type="alternative products">
    <event type="ribosomal frameshifting"/>
    <isoform>
        <id>Q99315-1</id>
        <name>Transposon Ty3-G Gag-Pol polyprotein</name>
        <sequence type="displayed"/>
    </isoform>
    <isoform>
        <id>Q12173-1</id>
        <name>Transposon Ty3-G Gag polyprotein</name>
        <sequence type="external"/>
    </isoform>
    <text evidence="12">The Gag-Pol polyprotein is generated by a +1 ribosomal frameshift.</text>
</comment>
<comment type="domain">
    <molecule>Integrase p61</molecule>
    <text>Integrase core domain contains the D-x(n)-D-x(35)-E motif, named for the phylogenetically conserved glutamic acid and aspartic acid residues and the invariant 35 amino acid spacing between the second and third acidic residues. Each acidic residue of the D,D(35)E motif is independently essential for the 3'-processing and strand transfer activities of purified integrase protein.</text>
</comment>
<comment type="PTM">
    <text evidence="8 11">Initially, virus-like particles (VLPs) are composed of the structural unprocessed proteins Gag and Gag-Pol, and also contain the host initiator methionine tRNA (tRNA(i)-Met) which serves as a primer for minus-strand DNA synthesis, and a dimer of genomic Ty RNA. Processing of the polyproteins occurs within the particle and proceeds by an ordered pathway, called maturation. First, the protease (PR) is released by autocatalytic cleavage of the Gag-Pol polyprotein, and this cleavage is a prerequisite for subsequent processing at the remaining sites to release the mature structural and catalytic proteins. Maturation takes place prior to the RT reaction and is required to produce transposition-competent VLPs.</text>
</comment>
<comment type="miscellaneous">
    <text>Retrotransposons are mobile genetic entities that are able to replicate via an RNA intermediate and a reverse transcription step. In contrast to retroviruses, retrotransposons are non-infectious, lack an envelope and remain intracellular. Ty3 retrotransposons belong to the gypsy-like elements (metaviridae).</text>
</comment>
<comment type="miscellaneous">
    <molecule>Isoform Transposon Ty3-G Gag-Pol polyprotein</molecule>
    <text>Produced by +1 ribosomal frameshifting between codon Ala-285 and Val-286 of the YGR109W-A ORF.</text>
</comment>
<comment type="sequence caution" evidence="13">
    <conflict type="erroneous gene model prediction">
        <sequence resource="EMBL-CDS" id="AAA98435"/>
    </conflict>
</comment>
<comment type="sequence caution" evidence="13">
    <conflict type="erroneous gene model prediction">
        <sequence resource="EMBL-CDS" id="CAA97115"/>
    </conflict>
</comment>
<comment type="sequence caution" evidence="13">
    <conflict type="erroneous gene model prediction">
        <sequence resource="EMBL-CDS" id="CAA97117"/>
    </conflict>
</comment>
<comment type="sequence caution" evidence="13">
    <conflict type="erroneous gene model prediction">
        <sequence resource="EMBL-CDS" id="DAA08202"/>
    </conflict>
</comment>
<proteinExistence type="evidence at protein level"/>
<evidence type="ECO:0000250" key="1"/>
<evidence type="ECO:0000255" key="2"/>
<evidence type="ECO:0000255" key="3">
    <source>
        <dbReference type="PROSITE-ProRule" id="PRU00047"/>
    </source>
</evidence>
<evidence type="ECO:0000255" key="4">
    <source>
        <dbReference type="PROSITE-ProRule" id="PRU00405"/>
    </source>
</evidence>
<evidence type="ECO:0000255" key="5">
    <source>
        <dbReference type="PROSITE-ProRule" id="PRU00457"/>
    </source>
</evidence>
<evidence type="ECO:0000269" key="6">
    <source>
    </source>
</evidence>
<evidence type="ECO:0000269" key="7">
    <source>
    </source>
</evidence>
<evidence type="ECO:0000269" key="8">
    <source>
    </source>
</evidence>
<evidence type="ECO:0000269" key="9">
    <source>
    </source>
</evidence>
<evidence type="ECO:0000269" key="10">
    <source>
    </source>
</evidence>
<evidence type="ECO:0000269" key="11">
    <source>
    </source>
</evidence>
<evidence type="ECO:0000269" key="12">
    <source>
    </source>
</evidence>
<evidence type="ECO:0000305" key="13"/>
<evidence type="ECO:0007744" key="14">
    <source>
        <dbReference type="PDB" id="4OL8"/>
    </source>
</evidence>
<evidence type="ECO:0007744" key="15">
    <source>
        <dbReference type="PDB" id="7Q5B"/>
    </source>
</evidence>
<evidence type="ECO:0007829" key="16">
    <source>
        <dbReference type="PDB" id="4OL8"/>
    </source>
</evidence>
<sequence length="1547" mass="178307">MSFMDQIPGGGNYPKLPVECLPNFPIQPSLTFRGRNDSHKLKNFISEIMLNMSMISWPNDASRIVYCRRHLLNPAAQWANDFVQEQGILEITFDTFIQGLYQHFYKPPDINKIFNAITQLSEAKLGIERLNQRFRKIWDRMPPDFMTEKAAIMTYTRLLTKETYNIVRMHKPETLKDAMEEAYQTTALTERFFPGFELDADGDTIIGATTHLQEEYDSDYDSEDNLTQNGYVHTVRTRRSYNKPMSNHRNRRNNNPSREECIKNRLCFYCKKEGHRLNECRARKAVLTDLELESKDQQTPFIKTLPIVHYIAIPEMDNTAEKTIKIQNTKVKTLFDSGSPTSFIRRDIVELLKYEIYETPPLRFRGFVATKSAVTSEAVTIDLKINDLHITLAAYILDNMDYQLLIGNPILRRYPKILHTVLNTRESPDSLKPKTYRSETVNNVRTYSAGNRGNPRNIKLSFAPTILEATDPKSAGNRGDSRTKTLSLATTTPAAIDPLTTLDNPGSTQSTFAQFPIPEEASILEEDGKYSNVVSTIQSVEPNATDHSNKDTFCTLPVWLQQKYREIIRNDLPPRPADINNIPVKHDIEIKPGARLPRLQPYHVTEKNEQEINKIVQKLLDNKFIVPSKSPCSSPVVLVPKKDGTFRLCVDYRTLNKATISDPFPLPRIDNLLSRIGNAQIFTTLDLHSGYHQIPMEPKDRYKTAFVTPSGKYEYTVMPFGLVNAPSTFARYMADTFRDLRFVNVYLDDILIFSESPEEHWKHLDTVLERLKNENLIVKKKKCKFASEETEFLGYSIGIQKIAPLQHKCAAIRDFPTPKTVKQAQRFLGMINYYRRFIPNCSKIAQPIQLFICDKSQWTEKQDKAIDKLKDALCNSPVLVPFNNKANYRLTTDASKDGIGAVLEEVDNKNKLVGVVGYFSKSLESAQKNYPAGELELLGIIKALHHFRYMLHGKHFTLRTDHISLLSLQNKNEPARRVQRWLDDLATYDFTLEYLAGPKNVVADAISRAVYTITPETSRPIDTESWKSYYKSDPLCSAVLIHMKELTQHNVTPEDMSAFRSYQKKLELSETFRKNYSLEDEMIYYQDRLVVPIKQQNAVMRLYHDHTLFGGHFGVTVTLAKISPIYYWPKLQHSIIQYIRTCVQCQLIKSHRPRLHGLLQPLPIAEGRWLDISMDFVTGLPPTSNNLNMILVVVDRFSKRAHFIATRKTLDATQLIDLLFRYIFSYHGFPRTITSDRDVRMTADKYQELTKRLGIKSTMSSANHPQTDGQSERTIQTLNRLLRAYASTNIQNWHVYLPQIEFVYNSTPTRTLGKSPFEIDLGYLPNTPAIKSDDEVNARSFTAVELAKHLKALTIQTKEQLEHAQIEMETNNNQRRKPLLLNIGDHVLVHRDAYFKKGAYMKVQQIYVGPFRVVKKINDNAYELDLNSHKKKHRVINVQFLKKFVYRPDAYPKNKPISSTERIKRAHEVTALIGIDTTHKTYLCHMQDVDPTLSVEYSEAEFCQIPERTRRSILANFRQLYETQDNPEREEDVVSQNEICQYDNTSP</sequence>